<dbReference type="EMBL" id="M14430">
    <property type="protein sequence ID" value="AAA88349.1"/>
    <property type="molecule type" value="Genomic_DNA"/>
</dbReference>
<dbReference type="EMBL" id="EU771092">
    <property type="protein sequence ID" value="ACE96044.1"/>
    <property type="molecule type" value="Genomic_DNA"/>
</dbReference>
<dbReference type="PIR" id="JN0030">
    <property type="entry name" value="JN0030"/>
</dbReference>
<dbReference type="RefSeq" id="YP_002004550.1">
    <property type="nucleotide sequence ID" value="NC_011048.1"/>
</dbReference>
<dbReference type="TCDB" id="9.B.80.1.1">
    <property type="family name" value="the bacillus phage Phi29 (a podovirus) dna ejection system (Phi29-e) family"/>
</dbReference>
<dbReference type="GeneID" id="6446521"/>
<dbReference type="KEGG" id="vg:6446521"/>
<dbReference type="Proteomes" id="UP000001207">
    <property type="component" value="Genome"/>
</dbReference>
<dbReference type="GO" id="GO:0006260">
    <property type="term" value="P:DNA replication"/>
    <property type="evidence" value="ECO:0007669"/>
    <property type="project" value="UniProtKB-KW"/>
</dbReference>
<dbReference type="GO" id="GO:0039693">
    <property type="term" value="P:viral DNA genome replication"/>
    <property type="evidence" value="ECO:0000314"/>
    <property type="project" value="UniProtKB"/>
</dbReference>
<dbReference type="InterPro" id="IPR035184">
    <property type="entry name" value="Phage_Gp17"/>
</dbReference>
<dbReference type="Pfam" id="PF17549">
    <property type="entry name" value="Phage_Gp17"/>
    <property type="match status" value="1"/>
</dbReference>
<comment type="function">
    <text evidence="1 3">Involved in the replication of viral DNA (PubMed:9858710). It is required at the very beginning of the virus amplification, conditions in which a low number of viral DNA molecules enter the host cell, possibly to recruit the limiting amount of initiation factors at the replication origins (PubMed:9858710). Once the infection process is established and the other replication proteins reach optimal concentration, it becomes dispensable (PubMed:9858710). Optimizes the binding of protein p6 at the viral DNA ends, thus favoring the initiation of replication (PubMed:12480935).</text>
</comment>
<comment type="subunit">
    <text evidence="1">Homodimer. Interacts with the histone-like protein p6; this interaction optimizes the binding of protein p6 at the viral DNA ends, thus favoring the initiation of replication.</text>
</comment>
<comment type="induction">
    <text evidence="2">Expressed in the early phase of the viral replicative cycle (PubMed:6274853). The C2 promoter controls protein p17 transcription and is strongly inhibited by the viral histone-like protein p6, probably because of the formation of a p6-DNA nucleoprotein complex at the right end of the viral genome. Thus, protein p17 is synthesized very early after infection, and its synthesis declines later on due to the inhibition of the C2 promoter by protein p6.</text>
</comment>
<comment type="similarity">
    <text evidence="4">Belongs to the phi29likevirus protein p56 family.</text>
</comment>
<organismHost>
    <name type="scientific">Bacillus subtilis</name>
    <dbReference type="NCBI Taxonomy" id="1423"/>
</organismHost>
<accession>P03686</accession>
<accession>B3VMQ7</accession>
<name>GP17_BPPH2</name>
<proteinExistence type="evidence at protein level"/>
<organism>
    <name type="scientific">Bacillus phage phi29</name>
    <name type="common">Bacteriophage phi-29</name>
    <dbReference type="NCBI Taxonomy" id="2884424"/>
    <lineage>
        <taxon>Viruses</taxon>
        <taxon>Duplodnaviria</taxon>
        <taxon>Heunggongvirae</taxon>
        <taxon>Uroviricota</taxon>
        <taxon>Caudoviricetes</taxon>
        <taxon>Salasmaviridae</taxon>
        <taxon>Picovirinae</taxon>
        <taxon>Salasvirus</taxon>
        <taxon>Salasvirus phi29</taxon>
    </lineage>
</organism>
<reference key="1">
    <citation type="journal article" date="1985" name="Gene">
        <title>The complete sequence of the Bacillus phage phi 29 right early region.</title>
        <authorList>
            <person name="Garvey K.J."/>
            <person name="Yoshikawa H."/>
            <person name="Ito J."/>
        </authorList>
    </citation>
    <scope>NUCLEOTIDE SEQUENCE [GENOMIC DNA]</scope>
</reference>
<reference key="2">
    <citation type="submission" date="2008-05" db="EMBL/GenBank/DDBJ databases">
        <authorList>
            <person name="Villegas A.P."/>
            <person name="Lingohr E.J."/>
            <person name="Ceyssens P.-J."/>
            <person name="Kropinski A.M."/>
        </authorList>
    </citation>
    <scope>NUCLEOTIDE SEQUENCE [GENOMIC DNA]</scope>
</reference>
<reference key="3">
    <citation type="journal article" date="1981" name="Proc. Natl. Acad. Sci. U.S.A.">
        <title>Nucleotide sequences at the termini of phi 29 DNA.</title>
        <authorList>
            <person name="Yoshikawa H."/>
            <person name="Friedmann T."/>
            <person name="Ito J."/>
        </authorList>
    </citation>
    <scope>NUCLEOTIDE SEQUENCE [GENOMIC DNA] OF 1-24</scope>
</reference>
<reference key="4">
    <citation type="journal article" date="1982" name="J. Biol. Chem.">
        <title>Nucleotide sequences of transcription and translation initiation regions in Bacillus phage phi 29 early genes.</title>
        <authorList>
            <person name="Murray C.L."/>
            <person name="Rabinowitz J.C."/>
        </authorList>
    </citation>
    <scope>INDUCTION</scope>
    <scope>IDENTIFICATION</scope>
</reference>
<reference key="5">
    <citation type="journal article" date="1998" name="Gene">
        <title>Bacteriophage phi-29 early protein p17 is conditionally required for the first rounds of viral DNA replication.</title>
        <authorList>
            <person name="Crucitti P."/>
            <person name="Lazaro J.M."/>
            <person name="Benes V."/>
            <person name="Salas M."/>
        </authorList>
    </citation>
    <scope>FUNCTION</scope>
</reference>
<reference key="6">
    <citation type="journal article" date="2003" name="J. Biol. Chem.">
        <title>Bacteriophage phi 29 early protein p17. Self-association and hetero-association with the viral histone-like protein p6.</title>
        <authorList>
            <person name="Crucitti P."/>
            <person name="Abril A.M."/>
            <person name="Salas M."/>
        </authorList>
    </citation>
    <scope>SUBUNIT</scope>
    <scope>INTERACTION WITH THE HISTONE-LIKE PROTEIN P6</scope>
</reference>
<evidence type="ECO:0000269" key="1">
    <source>
    </source>
</evidence>
<evidence type="ECO:0000269" key="2">
    <source>
    </source>
</evidence>
<evidence type="ECO:0000269" key="3">
    <source>
    </source>
</evidence>
<evidence type="ECO:0000305" key="4"/>
<gene>
    <name type="primary">17</name>
</gene>
<sequence length="166" mass="19170">MNNYQLTINEVIDIINTNTEINKLVAKKENLFPTDLYDLDKQELIAIILNSDFALSSIKRVLLEVTVEELGTQDNDEDDELEDLDGEIDRVDYIDKDGIRFDVPRETSPHVDKSIVTFNDELLDEANKIAKSIQEHDFNDKAIEEAELKIFKNHLPSIYSMKKENK</sequence>
<protein>
    <recommendedName>
        <fullName>DNA replication protein 17</fullName>
    </recommendedName>
    <alternativeName>
        <fullName>Gene product 17</fullName>
        <shortName>gp17</shortName>
    </alternativeName>
    <alternativeName>
        <fullName>Protein p17</fullName>
    </alternativeName>
</protein>
<feature type="chain" id="PRO_0000106604" description="DNA replication protein 17">
    <location>
        <begin position="1"/>
        <end position="166"/>
    </location>
</feature>
<keyword id="KW-0235">DNA replication</keyword>
<keyword id="KW-0244">Early protein</keyword>
<keyword id="KW-1185">Reference proteome</keyword>
<keyword id="KW-1194">Viral DNA replication</keyword>